<proteinExistence type="inferred from homology"/>
<sequence length="484" mass="52105">MPISDFQVVIGLEVHAQLLTASKIFCGCSTAFGAAPNAHTCPVCLGLPGALPALNRSVVEMAVRTGLALGCEIRPKSVFARKNYFYPDLPKGYQISQYELPICEGGEVTFTLDGRDHTARLVRIHMEEDAGKNVHDVAADGASGVDLNRAGVPLVEIVSRPDLRSAEEAVEYLKALRAILMALGVNDGNMQEGSLRCDANVSVMRKGASELGTRCEIKNMNSFRFLKQAIEFEARRQVELIEAGEPVVQETRLFDPDRGETRSMRSKEEAHDYRYFPEPDLPPVIVEAALVERIRGELPELPRARAERYQRSLGLSAYDAGNLVADAAVSAWFDAALAAYGAGPEAAKKVANWVTGELARLANETGEAPAAWKVTPARLAATLRLVDAGTIGGPGAKQVLEEVFRTGAEPDAVVKAKGLAQVSDEGAIEAAVDKVLAANPGEAEKYRGGRKNLLGFFVGQVMKEMRGKGNPAVVNALLRRKLGD</sequence>
<comment type="function">
    <text evidence="1">Allows the formation of correctly charged Asn-tRNA(Asn) or Gln-tRNA(Gln) through the transamidation of misacylated Asp-tRNA(Asn) or Glu-tRNA(Gln) in organisms which lack either or both of asparaginyl-tRNA or glutaminyl-tRNA synthetases. The reaction takes place in the presence of glutamine and ATP through an activated phospho-Asp-tRNA(Asn) or phospho-Glu-tRNA(Gln).</text>
</comment>
<comment type="catalytic activity">
    <reaction evidence="1">
        <text>L-glutamyl-tRNA(Gln) + L-glutamine + ATP + H2O = L-glutaminyl-tRNA(Gln) + L-glutamate + ADP + phosphate + H(+)</text>
        <dbReference type="Rhea" id="RHEA:17521"/>
        <dbReference type="Rhea" id="RHEA-COMP:9681"/>
        <dbReference type="Rhea" id="RHEA-COMP:9684"/>
        <dbReference type="ChEBI" id="CHEBI:15377"/>
        <dbReference type="ChEBI" id="CHEBI:15378"/>
        <dbReference type="ChEBI" id="CHEBI:29985"/>
        <dbReference type="ChEBI" id="CHEBI:30616"/>
        <dbReference type="ChEBI" id="CHEBI:43474"/>
        <dbReference type="ChEBI" id="CHEBI:58359"/>
        <dbReference type="ChEBI" id="CHEBI:78520"/>
        <dbReference type="ChEBI" id="CHEBI:78521"/>
        <dbReference type="ChEBI" id="CHEBI:456216"/>
    </reaction>
</comment>
<comment type="catalytic activity">
    <reaction evidence="1">
        <text>L-aspartyl-tRNA(Asn) + L-glutamine + ATP + H2O = L-asparaginyl-tRNA(Asn) + L-glutamate + ADP + phosphate + 2 H(+)</text>
        <dbReference type="Rhea" id="RHEA:14513"/>
        <dbReference type="Rhea" id="RHEA-COMP:9674"/>
        <dbReference type="Rhea" id="RHEA-COMP:9677"/>
        <dbReference type="ChEBI" id="CHEBI:15377"/>
        <dbReference type="ChEBI" id="CHEBI:15378"/>
        <dbReference type="ChEBI" id="CHEBI:29985"/>
        <dbReference type="ChEBI" id="CHEBI:30616"/>
        <dbReference type="ChEBI" id="CHEBI:43474"/>
        <dbReference type="ChEBI" id="CHEBI:58359"/>
        <dbReference type="ChEBI" id="CHEBI:78515"/>
        <dbReference type="ChEBI" id="CHEBI:78516"/>
        <dbReference type="ChEBI" id="CHEBI:456216"/>
    </reaction>
</comment>
<comment type="subunit">
    <text evidence="1">Heterotrimer of A, B and C subunits.</text>
</comment>
<comment type="similarity">
    <text evidence="1">Belongs to the GatB/GatE family. GatB subfamily.</text>
</comment>
<gene>
    <name evidence="1" type="primary">gatB</name>
    <name type="ordered locus">AnaeK_4319</name>
</gene>
<evidence type="ECO:0000255" key="1">
    <source>
        <dbReference type="HAMAP-Rule" id="MF_00121"/>
    </source>
</evidence>
<dbReference type="EC" id="6.3.5.-" evidence="1"/>
<dbReference type="EMBL" id="CP001131">
    <property type="protein sequence ID" value="ACG75522.1"/>
    <property type="molecule type" value="Genomic_DNA"/>
</dbReference>
<dbReference type="RefSeq" id="WP_012528273.1">
    <property type="nucleotide sequence ID" value="NC_011145.1"/>
</dbReference>
<dbReference type="SMR" id="B4UIV0"/>
<dbReference type="KEGG" id="ank:AnaeK_4319"/>
<dbReference type="HOGENOM" id="CLU_019240_0_0_7"/>
<dbReference type="OrthoDB" id="9804078at2"/>
<dbReference type="Proteomes" id="UP000001871">
    <property type="component" value="Chromosome"/>
</dbReference>
<dbReference type="GO" id="GO:0050566">
    <property type="term" value="F:asparaginyl-tRNA synthase (glutamine-hydrolyzing) activity"/>
    <property type="evidence" value="ECO:0007669"/>
    <property type="project" value="RHEA"/>
</dbReference>
<dbReference type="GO" id="GO:0005524">
    <property type="term" value="F:ATP binding"/>
    <property type="evidence" value="ECO:0007669"/>
    <property type="project" value="UniProtKB-KW"/>
</dbReference>
<dbReference type="GO" id="GO:0050567">
    <property type="term" value="F:glutaminyl-tRNA synthase (glutamine-hydrolyzing) activity"/>
    <property type="evidence" value="ECO:0007669"/>
    <property type="project" value="UniProtKB-UniRule"/>
</dbReference>
<dbReference type="GO" id="GO:0070681">
    <property type="term" value="P:glutaminyl-tRNAGln biosynthesis via transamidation"/>
    <property type="evidence" value="ECO:0007669"/>
    <property type="project" value="TreeGrafter"/>
</dbReference>
<dbReference type="GO" id="GO:0006412">
    <property type="term" value="P:translation"/>
    <property type="evidence" value="ECO:0007669"/>
    <property type="project" value="UniProtKB-UniRule"/>
</dbReference>
<dbReference type="FunFam" id="1.10.10.410:FF:000001">
    <property type="entry name" value="Aspartyl/glutamyl-tRNA(Asn/Gln) amidotransferase subunit B"/>
    <property type="match status" value="1"/>
</dbReference>
<dbReference type="Gene3D" id="1.10.10.410">
    <property type="match status" value="1"/>
</dbReference>
<dbReference type="Gene3D" id="1.10.150.380">
    <property type="entry name" value="GatB domain, N-terminal subdomain"/>
    <property type="match status" value="1"/>
</dbReference>
<dbReference type="HAMAP" id="MF_00121">
    <property type="entry name" value="GatB"/>
    <property type="match status" value="1"/>
</dbReference>
<dbReference type="InterPro" id="IPR017959">
    <property type="entry name" value="Asn/Gln-tRNA_amidoTrfase_suB/E"/>
</dbReference>
<dbReference type="InterPro" id="IPR006075">
    <property type="entry name" value="Asn/Gln-tRNA_Trfase_suB/E_cat"/>
</dbReference>
<dbReference type="InterPro" id="IPR018027">
    <property type="entry name" value="Asn/Gln_amidotransferase"/>
</dbReference>
<dbReference type="InterPro" id="IPR003789">
    <property type="entry name" value="Asn/Gln_tRNA_amidoTrase-B-like"/>
</dbReference>
<dbReference type="InterPro" id="IPR004413">
    <property type="entry name" value="GatB"/>
</dbReference>
<dbReference type="InterPro" id="IPR042114">
    <property type="entry name" value="GatB_C_1"/>
</dbReference>
<dbReference type="InterPro" id="IPR023168">
    <property type="entry name" value="GatB_Yqey_C_2"/>
</dbReference>
<dbReference type="InterPro" id="IPR017958">
    <property type="entry name" value="Gln-tRNA_amidoTrfase_suB_CS"/>
</dbReference>
<dbReference type="InterPro" id="IPR014746">
    <property type="entry name" value="Gln_synth/guanido_kin_cat_dom"/>
</dbReference>
<dbReference type="NCBIfam" id="TIGR00133">
    <property type="entry name" value="gatB"/>
    <property type="match status" value="1"/>
</dbReference>
<dbReference type="NCBIfam" id="NF004012">
    <property type="entry name" value="PRK05477.1-2"/>
    <property type="match status" value="1"/>
</dbReference>
<dbReference type="NCBIfam" id="NF004014">
    <property type="entry name" value="PRK05477.1-4"/>
    <property type="match status" value="1"/>
</dbReference>
<dbReference type="NCBIfam" id="NF004015">
    <property type="entry name" value="PRK05477.1-5"/>
    <property type="match status" value="1"/>
</dbReference>
<dbReference type="PANTHER" id="PTHR11659">
    <property type="entry name" value="GLUTAMYL-TRNA GLN AMIDOTRANSFERASE SUBUNIT B MITOCHONDRIAL AND PROKARYOTIC PET112-RELATED"/>
    <property type="match status" value="1"/>
</dbReference>
<dbReference type="PANTHER" id="PTHR11659:SF0">
    <property type="entry name" value="GLUTAMYL-TRNA(GLN) AMIDOTRANSFERASE SUBUNIT B, MITOCHONDRIAL"/>
    <property type="match status" value="1"/>
</dbReference>
<dbReference type="Pfam" id="PF02934">
    <property type="entry name" value="GatB_N"/>
    <property type="match status" value="1"/>
</dbReference>
<dbReference type="Pfam" id="PF02637">
    <property type="entry name" value="GatB_Yqey"/>
    <property type="match status" value="1"/>
</dbReference>
<dbReference type="SMART" id="SM00845">
    <property type="entry name" value="GatB_Yqey"/>
    <property type="match status" value="1"/>
</dbReference>
<dbReference type="SUPFAM" id="SSF89095">
    <property type="entry name" value="GatB/YqeY motif"/>
    <property type="match status" value="1"/>
</dbReference>
<dbReference type="SUPFAM" id="SSF55931">
    <property type="entry name" value="Glutamine synthetase/guanido kinase"/>
    <property type="match status" value="1"/>
</dbReference>
<dbReference type="PROSITE" id="PS01234">
    <property type="entry name" value="GATB"/>
    <property type="match status" value="1"/>
</dbReference>
<reference key="1">
    <citation type="submission" date="2008-08" db="EMBL/GenBank/DDBJ databases">
        <title>Complete sequence of Anaeromyxobacter sp. K.</title>
        <authorList>
            <consortium name="US DOE Joint Genome Institute"/>
            <person name="Lucas S."/>
            <person name="Copeland A."/>
            <person name="Lapidus A."/>
            <person name="Glavina del Rio T."/>
            <person name="Dalin E."/>
            <person name="Tice H."/>
            <person name="Bruce D."/>
            <person name="Goodwin L."/>
            <person name="Pitluck S."/>
            <person name="Saunders E."/>
            <person name="Brettin T."/>
            <person name="Detter J.C."/>
            <person name="Han C."/>
            <person name="Larimer F."/>
            <person name="Land M."/>
            <person name="Hauser L."/>
            <person name="Kyrpides N."/>
            <person name="Ovchinnikiva G."/>
            <person name="Beliaev A."/>
        </authorList>
    </citation>
    <scope>NUCLEOTIDE SEQUENCE [LARGE SCALE GENOMIC DNA]</scope>
    <source>
        <strain>K</strain>
    </source>
</reference>
<feature type="chain" id="PRO_1000095180" description="Aspartyl/glutamyl-tRNA(Asn/Gln) amidotransferase subunit B">
    <location>
        <begin position="1"/>
        <end position="484"/>
    </location>
</feature>
<accession>B4UIV0</accession>
<name>GATB_ANASK</name>
<protein>
    <recommendedName>
        <fullName evidence="1">Aspartyl/glutamyl-tRNA(Asn/Gln) amidotransferase subunit B</fullName>
        <shortName evidence="1">Asp/Glu-ADT subunit B</shortName>
        <ecNumber evidence="1">6.3.5.-</ecNumber>
    </recommendedName>
</protein>
<organism>
    <name type="scientific">Anaeromyxobacter sp. (strain K)</name>
    <dbReference type="NCBI Taxonomy" id="447217"/>
    <lineage>
        <taxon>Bacteria</taxon>
        <taxon>Pseudomonadati</taxon>
        <taxon>Myxococcota</taxon>
        <taxon>Myxococcia</taxon>
        <taxon>Myxococcales</taxon>
        <taxon>Cystobacterineae</taxon>
        <taxon>Anaeromyxobacteraceae</taxon>
        <taxon>Anaeromyxobacter</taxon>
    </lineage>
</organism>
<keyword id="KW-0067">ATP-binding</keyword>
<keyword id="KW-0436">Ligase</keyword>
<keyword id="KW-0547">Nucleotide-binding</keyword>
<keyword id="KW-0648">Protein biosynthesis</keyword>